<accession>Q03VY2</accession>
<reference key="1">
    <citation type="journal article" date="2006" name="Proc. Natl. Acad. Sci. U.S.A.">
        <title>Comparative genomics of the lactic acid bacteria.</title>
        <authorList>
            <person name="Makarova K.S."/>
            <person name="Slesarev A."/>
            <person name="Wolf Y.I."/>
            <person name="Sorokin A."/>
            <person name="Mirkin B."/>
            <person name="Koonin E.V."/>
            <person name="Pavlov A."/>
            <person name="Pavlova N."/>
            <person name="Karamychev V."/>
            <person name="Polouchine N."/>
            <person name="Shakhova V."/>
            <person name="Grigoriev I."/>
            <person name="Lou Y."/>
            <person name="Rohksar D."/>
            <person name="Lucas S."/>
            <person name="Huang K."/>
            <person name="Goodstein D.M."/>
            <person name="Hawkins T."/>
            <person name="Plengvidhya V."/>
            <person name="Welker D."/>
            <person name="Hughes J."/>
            <person name="Goh Y."/>
            <person name="Benson A."/>
            <person name="Baldwin K."/>
            <person name="Lee J.-H."/>
            <person name="Diaz-Muniz I."/>
            <person name="Dosti B."/>
            <person name="Smeianov V."/>
            <person name="Wechter W."/>
            <person name="Barabote R."/>
            <person name="Lorca G."/>
            <person name="Altermann E."/>
            <person name="Barrangou R."/>
            <person name="Ganesan B."/>
            <person name="Xie Y."/>
            <person name="Rawsthorne H."/>
            <person name="Tamir D."/>
            <person name="Parker C."/>
            <person name="Breidt F."/>
            <person name="Broadbent J.R."/>
            <person name="Hutkins R."/>
            <person name="O'Sullivan D."/>
            <person name="Steele J."/>
            <person name="Unlu G."/>
            <person name="Saier M.H. Jr."/>
            <person name="Klaenhammer T."/>
            <person name="Richardson P."/>
            <person name="Kozyavkin S."/>
            <person name="Weimer B.C."/>
            <person name="Mills D.A."/>
        </authorList>
    </citation>
    <scope>NUCLEOTIDE SEQUENCE [LARGE SCALE GENOMIC DNA]</scope>
    <source>
        <strain>ATCC 8293 / DSM 20343 / BCRC 11652 / CCM 1803 / JCM 6124 / NCDO 523 / NBRC 100496 / NCIMB 8023 / NCTC 12954 / NRRL B-1118 / 37Y</strain>
    </source>
</reference>
<evidence type="ECO:0000255" key="1">
    <source>
        <dbReference type="HAMAP-Rule" id="MF_01020"/>
    </source>
</evidence>
<organism>
    <name type="scientific">Leuconostoc mesenteroides subsp. mesenteroides (strain ATCC 8293 / DSM 20343 / BCRC 11652 / CCM 1803 / JCM 6124 / NCDO 523 / NBRC 100496 / NCIMB 8023 / NCTC 12954 / NRRL B-1118 / 37Y)</name>
    <dbReference type="NCBI Taxonomy" id="203120"/>
    <lineage>
        <taxon>Bacteria</taxon>
        <taxon>Bacillati</taxon>
        <taxon>Bacillota</taxon>
        <taxon>Bacilli</taxon>
        <taxon>Lactobacillales</taxon>
        <taxon>Lactobacillaceae</taxon>
        <taxon>Leuconostoc</taxon>
    </lineage>
</organism>
<sequence>MPQQTIEELYEQALERKQNPQTGSYTDYLYQKGLDKILKKVGEESTEVILGAKNNNEELIYETSDLLFHLMVLLVEKGVSLDDIKDELGSRLGKKSLLHERADWRGDKKNEKDS</sequence>
<keyword id="KW-0028">Amino-acid biosynthesis</keyword>
<keyword id="KW-0067">ATP-binding</keyword>
<keyword id="KW-0963">Cytoplasm</keyword>
<keyword id="KW-0368">Histidine biosynthesis</keyword>
<keyword id="KW-0378">Hydrolase</keyword>
<keyword id="KW-0547">Nucleotide-binding</keyword>
<keyword id="KW-1185">Reference proteome</keyword>
<comment type="catalytic activity">
    <reaction evidence="1">
        <text>1-(5-phospho-beta-D-ribosyl)-ATP + H2O = 1-(5-phospho-beta-D-ribosyl)-5'-AMP + diphosphate + H(+)</text>
        <dbReference type="Rhea" id="RHEA:22828"/>
        <dbReference type="ChEBI" id="CHEBI:15377"/>
        <dbReference type="ChEBI" id="CHEBI:15378"/>
        <dbReference type="ChEBI" id="CHEBI:33019"/>
        <dbReference type="ChEBI" id="CHEBI:59457"/>
        <dbReference type="ChEBI" id="CHEBI:73183"/>
        <dbReference type="EC" id="3.6.1.31"/>
    </reaction>
</comment>
<comment type="pathway">
    <text evidence="1">Amino-acid biosynthesis; L-histidine biosynthesis; L-histidine from 5-phospho-alpha-D-ribose 1-diphosphate: step 2/9.</text>
</comment>
<comment type="subcellular location">
    <subcellularLocation>
        <location evidence="1">Cytoplasm</location>
    </subcellularLocation>
</comment>
<comment type="similarity">
    <text evidence="1">Belongs to the PRA-PH family.</text>
</comment>
<feature type="chain" id="PRO_0000319650" description="Phosphoribosyl-ATP pyrophosphatase">
    <location>
        <begin position="1"/>
        <end position="114"/>
    </location>
</feature>
<gene>
    <name evidence="1" type="primary">hisE</name>
    <name type="ordered locus">LEUM_1548</name>
</gene>
<dbReference type="EC" id="3.6.1.31" evidence="1"/>
<dbReference type="EMBL" id="CP000414">
    <property type="protein sequence ID" value="ABJ62640.1"/>
    <property type="molecule type" value="Genomic_DNA"/>
</dbReference>
<dbReference type="RefSeq" id="WP_011680214.1">
    <property type="nucleotide sequence ID" value="NC_008531.1"/>
</dbReference>
<dbReference type="SMR" id="Q03VY2"/>
<dbReference type="EnsemblBacteria" id="ABJ62640">
    <property type="protein sequence ID" value="ABJ62640"/>
    <property type="gene ID" value="LEUM_1548"/>
</dbReference>
<dbReference type="GeneID" id="29577312"/>
<dbReference type="KEGG" id="lme:LEUM_1548"/>
<dbReference type="eggNOG" id="COG0140">
    <property type="taxonomic scope" value="Bacteria"/>
</dbReference>
<dbReference type="HOGENOM" id="CLU_123337_0_0_9"/>
<dbReference type="UniPathway" id="UPA00031">
    <property type="reaction ID" value="UER00007"/>
</dbReference>
<dbReference type="Proteomes" id="UP000000362">
    <property type="component" value="Chromosome"/>
</dbReference>
<dbReference type="GO" id="GO:0005737">
    <property type="term" value="C:cytoplasm"/>
    <property type="evidence" value="ECO:0007669"/>
    <property type="project" value="UniProtKB-SubCell"/>
</dbReference>
<dbReference type="GO" id="GO:0005524">
    <property type="term" value="F:ATP binding"/>
    <property type="evidence" value="ECO:0007669"/>
    <property type="project" value="UniProtKB-KW"/>
</dbReference>
<dbReference type="GO" id="GO:0004636">
    <property type="term" value="F:phosphoribosyl-ATP diphosphatase activity"/>
    <property type="evidence" value="ECO:0007669"/>
    <property type="project" value="UniProtKB-UniRule"/>
</dbReference>
<dbReference type="GO" id="GO:0000105">
    <property type="term" value="P:L-histidine biosynthetic process"/>
    <property type="evidence" value="ECO:0007669"/>
    <property type="project" value="UniProtKB-UniRule"/>
</dbReference>
<dbReference type="CDD" id="cd11534">
    <property type="entry name" value="NTP-PPase_HisIE_like"/>
    <property type="match status" value="1"/>
</dbReference>
<dbReference type="Gene3D" id="1.10.287.1080">
    <property type="entry name" value="MazG-like"/>
    <property type="match status" value="1"/>
</dbReference>
<dbReference type="HAMAP" id="MF_01020">
    <property type="entry name" value="HisE"/>
    <property type="match status" value="1"/>
</dbReference>
<dbReference type="InterPro" id="IPR008179">
    <property type="entry name" value="HisE"/>
</dbReference>
<dbReference type="InterPro" id="IPR021130">
    <property type="entry name" value="PRib-ATP_PPHydrolase-like"/>
</dbReference>
<dbReference type="NCBIfam" id="TIGR03188">
    <property type="entry name" value="histidine_hisI"/>
    <property type="match status" value="1"/>
</dbReference>
<dbReference type="PANTHER" id="PTHR42945">
    <property type="entry name" value="HISTIDINE BIOSYNTHESIS BIFUNCTIONAL PROTEIN"/>
    <property type="match status" value="1"/>
</dbReference>
<dbReference type="PANTHER" id="PTHR42945:SF9">
    <property type="entry name" value="HISTIDINE BIOSYNTHESIS BIFUNCTIONAL PROTEIN HISIE"/>
    <property type="match status" value="1"/>
</dbReference>
<dbReference type="Pfam" id="PF01503">
    <property type="entry name" value="PRA-PH"/>
    <property type="match status" value="1"/>
</dbReference>
<dbReference type="SUPFAM" id="SSF101386">
    <property type="entry name" value="all-alpha NTP pyrophosphatases"/>
    <property type="match status" value="1"/>
</dbReference>
<name>HIS2_LEUMM</name>
<protein>
    <recommendedName>
        <fullName evidence="1">Phosphoribosyl-ATP pyrophosphatase</fullName>
        <shortName evidence="1">PRA-PH</shortName>
        <ecNumber evidence="1">3.6.1.31</ecNumber>
    </recommendedName>
</protein>
<proteinExistence type="inferred from homology"/>